<proteinExistence type="inferred from homology"/>
<sequence length="296" mass="31840">MAPSNLPPVFNATSQDIEMLLAAQCHLGSKNLQVHMEPYLWKTRPDGINVINIGKTWEKIVLAARIIAAVDNPADICVISARPYGQRAVLKFAAHTGAVAIAGRFTPGNFTNYITRSFKEPRLIIVTDPRTDHQAIKEASYVNIPVIALCDTDSPTEFVDVAIPTNNKGRHAIGLIWWMLAREVLRLRGTLASRETEWDVVVDLYFYRDPEAEENKEIEEAKVPGAEEVGAAAIESGLVGDSWEAQAAPAFAGAGVPAGAAPGWEAEGGVDWAASSAAPADTWAGESGNPDAGVKW</sequence>
<name>RSSA_AJECG</name>
<gene>
    <name evidence="1" type="primary">RPS0</name>
    <name type="ORF">HCBG_03797</name>
</gene>
<comment type="function">
    <text evidence="1">Required for the assembly and/or stability of the 40S ribosomal subunit. Required for the processing of the 20S rRNA-precursor to mature 18S rRNA in a late step of the maturation of 40S ribosomal subunits.</text>
</comment>
<comment type="subunit">
    <text evidence="1">Component of the small ribosomal subunit. Mature ribosomes consist of a small (40S) and a large (60S) subunit. The 40S subunit contains about 33 different proteins and 1 molecule of RNA (18S). The 60S subunit contains about 49 different proteins and 3 molecules of RNA (25S, 5.8S and 5S). Interacts with RPS21.</text>
</comment>
<comment type="subcellular location">
    <subcellularLocation>
        <location evidence="1">Cytoplasm</location>
    </subcellularLocation>
</comment>
<comment type="similarity">
    <text evidence="1">Belongs to the universal ribosomal protein uS2 family.</text>
</comment>
<organism>
    <name type="scientific">Ajellomyces capsulatus (strain G186AR / H82 / ATCC MYA-2454 / RMSCC 2432)</name>
    <name type="common">Darling's disease fungus</name>
    <name type="synonym">Histoplasma capsulatum</name>
    <dbReference type="NCBI Taxonomy" id="447093"/>
    <lineage>
        <taxon>Eukaryota</taxon>
        <taxon>Fungi</taxon>
        <taxon>Dikarya</taxon>
        <taxon>Ascomycota</taxon>
        <taxon>Pezizomycotina</taxon>
        <taxon>Eurotiomycetes</taxon>
        <taxon>Eurotiomycetidae</taxon>
        <taxon>Onygenales</taxon>
        <taxon>Ajellomycetaceae</taxon>
        <taxon>Histoplasma</taxon>
    </lineage>
</organism>
<reference key="1">
    <citation type="submission" date="2009-02" db="EMBL/GenBank/DDBJ databases">
        <title>The genome sequence of Ajellomyces capsulatus strain G186AR.</title>
        <authorList>
            <person name="Champion M."/>
            <person name="Cuomo C.A."/>
            <person name="Ma L.-J."/>
            <person name="Henn M.R."/>
            <person name="Sil A."/>
            <person name="Goldman B."/>
            <person name="Young S.K."/>
            <person name="Kodira C.D."/>
            <person name="Zeng Q."/>
            <person name="Koehrsen M."/>
            <person name="Alvarado L."/>
            <person name="Berlin A."/>
            <person name="Borenstein D."/>
            <person name="Chen Z."/>
            <person name="Engels R."/>
            <person name="Freedman E."/>
            <person name="Gellesch M."/>
            <person name="Goldberg J."/>
            <person name="Griggs A."/>
            <person name="Gujja S."/>
            <person name="Heiman D."/>
            <person name="Hepburn T."/>
            <person name="Howarth C."/>
            <person name="Jen D."/>
            <person name="Larson L."/>
            <person name="Lewis B."/>
            <person name="Mehta T."/>
            <person name="Park D."/>
            <person name="Pearson M."/>
            <person name="Roberts A."/>
            <person name="Saif S."/>
            <person name="Shea T."/>
            <person name="Shenoy N."/>
            <person name="Sisk P."/>
            <person name="Stolte C."/>
            <person name="Sykes S."/>
            <person name="Walk T."/>
            <person name="White J."/>
            <person name="Yandava C."/>
            <person name="Klein B."/>
            <person name="McEwen J.G."/>
            <person name="Puccia R."/>
            <person name="Goldman G.H."/>
            <person name="Felipe M.S."/>
            <person name="Nino-Vega G."/>
            <person name="San-Blas G."/>
            <person name="Taylor J."/>
            <person name="Mendoza L."/>
            <person name="Galagan J.E."/>
            <person name="Nusbaum C."/>
            <person name="Birren B.W."/>
        </authorList>
    </citation>
    <scope>NUCLEOTIDE SEQUENCE [LARGE SCALE GENOMIC DNA]</scope>
    <source>
        <strain>G186AR / H82 / ATCC MYA-2454 / RMSCC 2432</strain>
    </source>
</reference>
<keyword id="KW-0963">Cytoplasm</keyword>
<keyword id="KW-1185">Reference proteome</keyword>
<keyword id="KW-0687">Ribonucleoprotein</keyword>
<keyword id="KW-0689">Ribosomal protein</keyword>
<evidence type="ECO:0000255" key="1">
    <source>
        <dbReference type="HAMAP-Rule" id="MF_03015"/>
    </source>
</evidence>
<evidence type="ECO:0000256" key="2">
    <source>
        <dbReference type="SAM" id="MobiDB-lite"/>
    </source>
</evidence>
<evidence type="ECO:0000305" key="3"/>
<accession>C0NKW7</accession>
<protein>
    <recommendedName>
        <fullName evidence="1">Small ribosomal subunit protein uS2</fullName>
    </recommendedName>
    <alternativeName>
        <fullName evidence="3">40S ribosomal protein S0</fullName>
    </alternativeName>
</protein>
<dbReference type="EMBL" id="GG663366">
    <property type="protein sequence ID" value="EEH08508.1"/>
    <property type="molecule type" value="Genomic_DNA"/>
</dbReference>
<dbReference type="SMR" id="C0NKW7"/>
<dbReference type="FunCoup" id="C0NKW7">
    <property type="interactions" value="1179"/>
</dbReference>
<dbReference type="STRING" id="447093.C0NKW7"/>
<dbReference type="VEuPathDB" id="FungiDB:I7I50_07531"/>
<dbReference type="HOGENOM" id="CLU_058171_0_1_1"/>
<dbReference type="InParanoid" id="C0NKW7"/>
<dbReference type="Proteomes" id="UP000001631">
    <property type="component" value="Unassembled WGS sequence"/>
</dbReference>
<dbReference type="GO" id="GO:0022627">
    <property type="term" value="C:cytosolic small ribosomal subunit"/>
    <property type="evidence" value="ECO:0007669"/>
    <property type="project" value="UniProtKB-UniRule"/>
</dbReference>
<dbReference type="GO" id="GO:0003735">
    <property type="term" value="F:structural constituent of ribosome"/>
    <property type="evidence" value="ECO:0007669"/>
    <property type="project" value="UniProtKB-UniRule"/>
</dbReference>
<dbReference type="GO" id="GO:0000028">
    <property type="term" value="P:ribosomal small subunit assembly"/>
    <property type="evidence" value="ECO:0007669"/>
    <property type="project" value="UniProtKB-UniRule"/>
</dbReference>
<dbReference type="GO" id="GO:0006412">
    <property type="term" value="P:translation"/>
    <property type="evidence" value="ECO:0007669"/>
    <property type="project" value="UniProtKB-UniRule"/>
</dbReference>
<dbReference type="CDD" id="cd01425">
    <property type="entry name" value="RPS2"/>
    <property type="match status" value="1"/>
</dbReference>
<dbReference type="FunFam" id="3.40.50.10490:FF:000010">
    <property type="entry name" value="40S ribosomal protein S0"/>
    <property type="match status" value="1"/>
</dbReference>
<dbReference type="Gene3D" id="3.40.50.10490">
    <property type="entry name" value="Glucose-6-phosphate isomerase like protein, domain 1"/>
    <property type="match status" value="1"/>
</dbReference>
<dbReference type="HAMAP" id="MF_03015">
    <property type="entry name" value="Ribosomal_S2_euk"/>
    <property type="match status" value="1"/>
</dbReference>
<dbReference type="InterPro" id="IPR001865">
    <property type="entry name" value="Ribosomal_uS2"/>
</dbReference>
<dbReference type="InterPro" id="IPR032281">
    <property type="entry name" value="Ribosomal_uS2_C"/>
</dbReference>
<dbReference type="InterPro" id="IPR018130">
    <property type="entry name" value="Ribosomal_uS2_CS"/>
</dbReference>
<dbReference type="InterPro" id="IPR027498">
    <property type="entry name" value="Ribosomal_uS2_euk"/>
</dbReference>
<dbReference type="InterPro" id="IPR005707">
    <property type="entry name" value="Ribosomal_uS2_euk/arc"/>
</dbReference>
<dbReference type="InterPro" id="IPR023591">
    <property type="entry name" value="Ribosomal_uS2_flav_dom_sf"/>
</dbReference>
<dbReference type="NCBIfam" id="TIGR01012">
    <property type="entry name" value="uS2_euk_arch"/>
    <property type="match status" value="1"/>
</dbReference>
<dbReference type="PANTHER" id="PTHR11489">
    <property type="entry name" value="40S RIBOSOMAL PROTEIN SA"/>
    <property type="match status" value="1"/>
</dbReference>
<dbReference type="Pfam" id="PF16122">
    <property type="entry name" value="40S_SA_C"/>
    <property type="match status" value="1"/>
</dbReference>
<dbReference type="Pfam" id="PF00318">
    <property type="entry name" value="Ribosomal_S2"/>
    <property type="match status" value="2"/>
</dbReference>
<dbReference type="PRINTS" id="PR00395">
    <property type="entry name" value="RIBOSOMALS2"/>
</dbReference>
<dbReference type="SUPFAM" id="SSF52313">
    <property type="entry name" value="Ribosomal protein S2"/>
    <property type="match status" value="1"/>
</dbReference>
<dbReference type="PROSITE" id="PS00963">
    <property type="entry name" value="RIBOSOMAL_S2_2"/>
    <property type="match status" value="1"/>
</dbReference>
<feature type="chain" id="PRO_0000389268" description="Small ribosomal subunit protein uS2">
    <location>
        <begin position="1"/>
        <end position="296"/>
    </location>
</feature>
<feature type="region of interest" description="Disordered" evidence="2">
    <location>
        <begin position="274"/>
        <end position="296"/>
    </location>
</feature>
<feature type="compositionally biased region" description="Low complexity" evidence="2">
    <location>
        <begin position="274"/>
        <end position="284"/>
    </location>
</feature>